<accession>Q6GFF3</accession>
<organism>
    <name type="scientific">Staphylococcus aureus (strain MRSA252)</name>
    <dbReference type="NCBI Taxonomy" id="282458"/>
    <lineage>
        <taxon>Bacteria</taxon>
        <taxon>Bacillati</taxon>
        <taxon>Bacillota</taxon>
        <taxon>Bacilli</taxon>
        <taxon>Bacillales</taxon>
        <taxon>Staphylococcaceae</taxon>
        <taxon>Staphylococcus</taxon>
    </lineage>
</organism>
<protein>
    <recommendedName>
        <fullName evidence="1">DNA ligase</fullName>
        <ecNumber evidence="1">6.5.1.2</ecNumber>
    </recommendedName>
    <alternativeName>
        <fullName evidence="1">Polydeoxyribonucleotide synthase [NAD(+)]</fullName>
    </alternativeName>
</protein>
<comment type="function">
    <text evidence="1">DNA ligase that catalyzes the formation of phosphodiester linkages between 5'-phosphoryl and 3'-hydroxyl groups in double-stranded DNA using NAD as a coenzyme and as the energy source for the reaction. It is essential for DNA replication and repair of damaged DNA.</text>
</comment>
<comment type="catalytic activity">
    <reaction evidence="1">
        <text>NAD(+) + (deoxyribonucleotide)n-3'-hydroxyl + 5'-phospho-(deoxyribonucleotide)m = (deoxyribonucleotide)n+m + AMP + beta-nicotinamide D-nucleotide.</text>
        <dbReference type="EC" id="6.5.1.2"/>
    </reaction>
</comment>
<comment type="cofactor">
    <cofactor evidence="1">
        <name>Mg(2+)</name>
        <dbReference type="ChEBI" id="CHEBI:18420"/>
    </cofactor>
    <cofactor evidence="1">
        <name>Mn(2+)</name>
        <dbReference type="ChEBI" id="CHEBI:29035"/>
    </cofactor>
</comment>
<comment type="similarity">
    <text evidence="1">Belongs to the NAD-dependent DNA ligase family. LigA subfamily.</text>
</comment>
<feature type="chain" id="PRO_0000161759" description="DNA ligase">
    <location>
        <begin position="1"/>
        <end position="667"/>
    </location>
</feature>
<feature type="domain" description="BRCT" evidence="1">
    <location>
        <begin position="586"/>
        <end position="667"/>
    </location>
</feature>
<feature type="active site" description="N6-AMP-lysine intermediate" evidence="1">
    <location>
        <position position="112"/>
    </location>
</feature>
<feature type="binding site" evidence="1">
    <location>
        <begin position="32"/>
        <end position="36"/>
    </location>
    <ligand>
        <name>NAD(+)</name>
        <dbReference type="ChEBI" id="CHEBI:57540"/>
    </ligand>
</feature>
<feature type="binding site" evidence="1">
    <location>
        <begin position="81"/>
        <end position="82"/>
    </location>
    <ligand>
        <name>NAD(+)</name>
        <dbReference type="ChEBI" id="CHEBI:57540"/>
    </ligand>
</feature>
<feature type="binding site" evidence="1">
    <location>
        <position position="110"/>
    </location>
    <ligand>
        <name>NAD(+)</name>
        <dbReference type="ChEBI" id="CHEBI:57540"/>
    </ligand>
</feature>
<feature type="binding site" evidence="1">
    <location>
        <position position="133"/>
    </location>
    <ligand>
        <name>NAD(+)</name>
        <dbReference type="ChEBI" id="CHEBI:57540"/>
    </ligand>
</feature>
<feature type="binding site" evidence="1">
    <location>
        <position position="167"/>
    </location>
    <ligand>
        <name>NAD(+)</name>
        <dbReference type="ChEBI" id="CHEBI:57540"/>
    </ligand>
</feature>
<feature type="binding site" evidence="1">
    <location>
        <position position="283"/>
    </location>
    <ligand>
        <name>NAD(+)</name>
        <dbReference type="ChEBI" id="CHEBI:57540"/>
    </ligand>
</feature>
<feature type="binding site" evidence="1">
    <location>
        <position position="307"/>
    </location>
    <ligand>
        <name>NAD(+)</name>
        <dbReference type="ChEBI" id="CHEBI:57540"/>
    </ligand>
</feature>
<feature type="binding site" evidence="1">
    <location>
        <position position="401"/>
    </location>
    <ligand>
        <name>Zn(2+)</name>
        <dbReference type="ChEBI" id="CHEBI:29105"/>
    </ligand>
</feature>
<feature type="binding site" evidence="1">
    <location>
        <position position="404"/>
    </location>
    <ligand>
        <name>Zn(2+)</name>
        <dbReference type="ChEBI" id="CHEBI:29105"/>
    </ligand>
</feature>
<feature type="binding site" evidence="1">
    <location>
        <position position="419"/>
    </location>
    <ligand>
        <name>Zn(2+)</name>
        <dbReference type="ChEBI" id="CHEBI:29105"/>
    </ligand>
</feature>
<feature type="binding site" evidence="1">
    <location>
        <position position="424"/>
    </location>
    <ligand>
        <name>Zn(2+)</name>
        <dbReference type="ChEBI" id="CHEBI:29105"/>
    </ligand>
</feature>
<name>DNLJ_STAAR</name>
<keyword id="KW-0227">DNA damage</keyword>
<keyword id="KW-0234">DNA repair</keyword>
<keyword id="KW-0235">DNA replication</keyword>
<keyword id="KW-0436">Ligase</keyword>
<keyword id="KW-0460">Magnesium</keyword>
<keyword id="KW-0464">Manganese</keyword>
<keyword id="KW-0479">Metal-binding</keyword>
<keyword id="KW-0520">NAD</keyword>
<keyword id="KW-0862">Zinc</keyword>
<dbReference type="EC" id="6.5.1.2" evidence="1"/>
<dbReference type="EMBL" id="BX571856">
    <property type="protein sequence ID" value="CAG40981.1"/>
    <property type="molecule type" value="Genomic_DNA"/>
</dbReference>
<dbReference type="RefSeq" id="WP_000774552.1">
    <property type="nucleotide sequence ID" value="NC_002952.2"/>
</dbReference>
<dbReference type="SMR" id="Q6GFF3"/>
<dbReference type="KEGG" id="sar:SAR1996"/>
<dbReference type="HOGENOM" id="CLU_007764_2_1_9"/>
<dbReference type="Proteomes" id="UP000000596">
    <property type="component" value="Chromosome"/>
</dbReference>
<dbReference type="GO" id="GO:0005829">
    <property type="term" value="C:cytosol"/>
    <property type="evidence" value="ECO:0007669"/>
    <property type="project" value="TreeGrafter"/>
</dbReference>
<dbReference type="GO" id="GO:0003677">
    <property type="term" value="F:DNA binding"/>
    <property type="evidence" value="ECO:0007669"/>
    <property type="project" value="InterPro"/>
</dbReference>
<dbReference type="GO" id="GO:0003911">
    <property type="term" value="F:DNA ligase (NAD+) activity"/>
    <property type="evidence" value="ECO:0007669"/>
    <property type="project" value="UniProtKB-UniRule"/>
</dbReference>
<dbReference type="GO" id="GO:0046872">
    <property type="term" value="F:metal ion binding"/>
    <property type="evidence" value="ECO:0007669"/>
    <property type="project" value="UniProtKB-KW"/>
</dbReference>
<dbReference type="GO" id="GO:0006281">
    <property type="term" value="P:DNA repair"/>
    <property type="evidence" value="ECO:0007669"/>
    <property type="project" value="UniProtKB-KW"/>
</dbReference>
<dbReference type="GO" id="GO:0006260">
    <property type="term" value="P:DNA replication"/>
    <property type="evidence" value="ECO:0007669"/>
    <property type="project" value="UniProtKB-KW"/>
</dbReference>
<dbReference type="CDD" id="cd17748">
    <property type="entry name" value="BRCT_DNA_ligase_like"/>
    <property type="match status" value="1"/>
</dbReference>
<dbReference type="CDD" id="cd00114">
    <property type="entry name" value="LIGANc"/>
    <property type="match status" value="1"/>
</dbReference>
<dbReference type="FunFam" id="1.10.150.20:FF:000006">
    <property type="entry name" value="DNA ligase"/>
    <property type="match status" value="1"/>
</dbReference>
<dbReference type="FunFam" id="1.10.150.20:FF:000007">
    <property type="entry name" value="DNA ligase"/>
    <property type="match status" value="1"/>
</dbReference>
<dbReference type="FunFam" id="1.10.287.610:FF:000005">
    <property type="entry name" value="DNA ligase"/>
    <property type="match status" value="1"/>
</dbReference>
<dbReference type="FunFam" id="2.40.50.140:FF:000012">
    <property type="entry name" value="DNA ligase"/>
    <property type="match status" value="1"/>
</dbReference>
<dbReference type="FunFam" id="3.30.470.30:FF:000001">
    <property type="entry name" value="DNA ligase"/>
    <property type="match status" value="1"/>
</dbReference>
<dbReference type="FunFam" id="3.40.50.10190:FF:000045">
    <property type="entry name" value="DNA ligase"/>
    <property type="match status" value="1"/>
</dbReference>
<dbReference type="FunFam" id="6.20.10.30:FF:000002">
    <property type="entry name" value="DNA ligase"/>
    <property type="match status" value="1"/>
</dbReference>
<dbReference type="Gene3D" id="6.20.10.30">
    <property type="match status" value="1"/>
</dbReference>
<dbReference type="Gene3D" id="1.10.150.20">
    <property type="entry name" value="5' to 3' exonuclease, C-terminal subdomain"/>
    <property type="match status" value="2"/>
</dbReference>
<dbReference type="Gene3D" id="3.40.50.10190">
    <property type="entry name" value="BRCT domain"/>
    <property type="match status" value="1"/>
</dbReference>
<dbReference type="Gene3D" id="3.30.470.30">
    <property type="entry name" value="DNA ligase/mRNA capping enzyme"/>
    <property type="match status" value="1"/>
</dbReference>
<dbReference type="Gene3D" id="1.10.287.610">
    <property type="entry name" value="Helix hairpin bin"/>
    <property type="match status" value="1"/>
</dbReference>
<dbReference type="Gene3D" id="2.40.50.140">
    <property type="entry name" value="Nucleic acid-binding proteins"/>
    <property type="match status" value="1"/>
</dbReference>
<dbReference type="HAMAP" id="MF_01588">
    <property type="entry name" value="DNA_ligase_A"/>
    <property type="match status" value="1"/>
</dbReference>
<dbReference type="InterPro" id="IPR001357">
    <property type="entry name" value="BRCT_dom"/>
</dbReference>
<dbReference type="InterPro" id="IPR036420">
    <property type="entry name" value="BRCT_dom_sf"/>
</dbReference>
<dbReference type="InterPro" id="IPR041663">
    <property type="entry name" value="DisA/LigA_HHH"/>
</dbReference>
<dbReference type="InterPro" id="IPR001679">
    <property type="entry name" value="DNA_ligase"/>
</dbReference>
<dbReference type="InterPro" id="IPR018239">
    <property type="entry name" value="DNA_ligase_AS"/>
</dbReference>
<dbReference type="InterPro" id="IPR033136">
    <property type="entry name" value="DNA_ligase_CS"/>
</dbReference>
<dbReference type="InterPro" id="IPR013839">
    <property type="entry name" value="DNAligase_adenylation"/>
</dbReference>
<dbReference type="InterPro" id="IPR013840">
    <property type="entry name" value="DNAligase_N"/>
</dbReference>
<dbReference type="InterPro" id="IPR003583">
    <property type="entry name" value="Hlx-hairpin-Hlx_DNA-bd_motif"/>
</dbReference>
<dbReference type="InterPro" id="IPR012340">
    <property type="entry name" value="NA-bd_OB-fold"/>
</dbReference>
<dbReference type="InterPro" id="IPR004150">
    <property type="entry name" value="NAD_DNA_ligase_OB"/>
</dbReference>
<dbReference type="InterPro" id="IPR010994">
    <property type="entry name" value="RuvA_2-like"/>
</dbReference>
<dbReference type="InterPro" id="IPR004149">
    <property type="entry name" value="Znf_DNAligase_C4"/>
</dbReference>
<dbReference type="NCBIfam" id="TIGR00575">
    <property type="entry name" value="dnlj"/>
    <property type="match status" value="1"/>
</dbReference>
<dbReference type="NCBIfam" id="NF005932">
    <property type="entry name" value="PRK07956.1"/>
    <property type="match status" value="1"/>
</dbReference>
<dbReference type="PANTHER" id="PTHR23389">
    <property type="entry name" value="CHROMOSOME TRANSMISSION FIDELITY FACTOR 18"/>
    <property type="match status" value="1"/>
</dbReference>
<dbReference type="PANTHER" id="PTHR23389:SF9">
    <property type="entry name" value="DNA LIGASE"/>
    <property type="match status" value="1"/>
</dbReference>
<dbReference type="Pfam" id="PF00533">
    <property type="entry name" value="BRCT"/>
    <property type="match status" value="1"/>
</dbReference>
<dbReference type="Pfam" id="PF01653">
    <property type="entry name" value="DNA_ligase_aden"/>
    <property type="match status" value="1"/>
</dbReference>
<dbReference type="Pfam" id="PF03120">
    <property type="entry name" value="DNA_ligase_OB"/>
    <property type="match status" value="1"/>
</dbReference>
<dbReference type="Pfam" id="PF03119">
    <property type="entry name" value="DNA_ligase_ZBD"/>
    <property type="match status" value="1"/>
</dbReference>
<dbReference type="Pfam" id="PF12826">
    <property type="entry name" value="HHH_2"/>
    <property type="match status" value="1"/>
</dbReference>
<dbReference type="PIRSF" id="PIRSF001604">
    <property type="entry name" value="LigA"/>
    <property type="match status" value="1"/>
</dbReference>
<dbReference type="SMART" id="SM00292">
    <property type="entry name" value="BRCT"/>
    <property type="match status" value="1"/>
</dbReference>
<dbReference type="SMART" id="SM00278">
    <property type="entry name" value="HhH1"/>
    <property type="match status" value="3"/>
</dbReference>
<dbReference type="SMART" id="SM00532">
    <property type="entry name" value="LIGANc"/>
    <property type="match status" value="1"/>
</dbReference>
<dbReference type="SUPFAM" id="SSF52113">
    <property type="entry name" value="BRCT domain"/>
    <property type="match status" value="1"/>
</dbReference>
<dbReference type="SUPFAM" id="SSF56091">
    <property type="entry name" value="DNA ligase/mRNA capping enzyme, catalytic domain"/>
    <property type="match status" value="1"/>
</dbReference>
<dbReference type="SUPFAM" id="SSF50249">
    <property type="entry name" value="Nucleic acid-binding proteins"/>
    <property type="match status" value="1"/>
</dbReference>
<dbReference type="SUPFAM" id="SSF47781">
    <property type="entry name" value="RuvA domain 2-like"/>
    <property type="match status" value="1"/>
</dbReference>
<dbReference type="PROSITE" id="PS50172">
    <property type="entry name" value="BRCT"/>
    <property type="match status" value="1"/>
</dbReference>
<dbReference type="PROSITE" id="PS01055">
    <property type="entry name" value="DNA_LIGASE_N1"/>
    <property type="match status" value="1"/>
</dbReference>
<dbReference type="PROSITE" id="PS01056">
    <property type="entry name" value="DNA_LIGASE_N2"/>
    <property type="match status" value="1"/>
</dbReference>
<evidence type="ECO:0000255" key="1">
    <source>
        <dbReference type="HAMAP-Rule" id="MF_01588"/>
    </source>
</evidence>
<sequence length="667" mass="75039">MADLSSRVNELHDLLNQYSYEYYVEDNPSVPDSEYDKLLHELIKIEEEHPEFKTVDSPTVRVGGEAQASFNKVNHDTPMLSLGNAFNEDDLRKFDQRIREQIGNVEYMCELKIDGLAVSLKYVDGYFVQGLTRGDGTTGEDITENLKTIHAIPLKMKEPLNVEVRGEAYMPRRSFLRLNEEKEKNDEQLFANPRNAAAGSLRQLDSKLTAKRKLSVFIYSVNDFTDFNARSQSEALDELDKLGFTTNKNRARVSDIDGVLEYIEKWTSQRESLPYDIDGIVIKVNDLDQQDEMGFTQKSPRWAIAYKFPAEEVVTKLLDIELSIGRTGVVTPTAILEPVKVAGTTVSRASLHNEDLIHDRDIRIGDSVVVKKAGDIIPEVVRSIPERRPEDAVTYHMPTHCPSCGHELVRIEGEVALRCINPKCQAQLVEGLIHFVSRQAMNIDGLGTKIIQQLYQSELIKDVADIFYLTEEDLLPLDRMGQKKVDNLLAAIQQAKDNSLENLLFGLGIRHLGVKASQVLAEKYETIDRLLTVTEAELVEIHDIGDKVAQSVVTYLENEDIRALIQKLKDKHVNMIYKGIKTSDIEGHPEFSGKTIVLTGKLHQMTRNEASKWLASQGAKVTSSVTKNTDVVIAGEDAGSKLTKAQSLGIEIWTEQQFVDKQNELNS</sequence>
<proteinExistence type="inferred from homology"/>
<reference key="1">
    <citation type="journal article" date="2004" name="Proc. Natl. Acad. Sci. U.S.A.">
        <title>Complete genomes of two clinical Staphylococcus aureus strains: evidence for the rapid evolution of virulence and drug resistance.</title>
        <authorList>
            <person name="Holden M.T.G."/>
            <person name="Feil E.J."/>
            <person name="Lindsay J.A."/>
            <person name="Peacock S.J."/>
            <person name="Day N.P.J."/>
            <person name="Enright M.C."/>
            <person name="Foster T.J."/>
            <person name="Moore C.E."/>
            <person name="Hurst L."/>
            <person name="Atkin R."/>
            <person name="Barron A."/>
            <person name="Bason N."/>
            <person name="Bentley S.D."/>
            <person name="Chillingworth C."/>
            <person name="Chillingworth T."/>
            <person name="Churcher C."/>
            <person name="Clark L."/>
            <person name="Corton C."/>
            <person name="Cronin A."/>
            <person name="Doggett J."/>
            <person name="Dowd L."/>
            <person name="Feltwell T."/>
            <person name="Hance Z."/>
            <person name="Harris B."/>
            <person name="Hauser H."/>
            <person name="Holroyd S."/>
            <person name="Jagels K."/>
            <person name="James K.D."/>
            <person name="Lennard N."/>
            <person name="Line A."/>
            <person name="Mayes R."/>
            <person name="Moule S."/>
            <person name="Mungall K."/>
            <person name="Ormond D."/>
            <person name="Quail M.A."/>
            <person name="Rabbinowitsch E."/>
            <person name="Rutherford K.M."/>
            <person name="Sanders M."/>
            <person name="Sharp S."/>
            <person name="Simmonds M."/>
            <person name="Stevens K."/>
            <person name="Whitehead S."/>
            <person name="Barrell B.G."/>
            <person name="Spratt B.G."/>
            <person name="Parkhill J."/>
        </authorList>
    </citation>
    <scope>NUCLEOTIDE SEQUENCE [LARGE SCALE GENOMIC DNA]</scope>
    <source>
        <strain>MRSA252</strain>
    </source>
</reference>
<gene>
    <name evidence="1" type="primary">ligA</name>
    <name type="synonym">lig</name>
    <name type="ordered locus">SAR1996</name>
</gene>